<protein>
    <recommendedName>
        <fullName>Replicative DNA helicase DnaB</fullName>
        <ecNumber evidence="1">5.6.2.3</ecNumber>
    </recommendedName>
    <alternativeName>
        <fullName evidence="4">DNA 5'-3' helicase DnaB</fullName>
    </alternativeName>
</protein>
<proteinExistence type="inferred from homology"/>
<evidence type="ECO:0000250" key="1">
    <source>
        <dbReference type="UniProtKB" id="P0ACB0"/>
    </source>
</evidence>
<evidence type="ECO:0000255" key="2">
    <source>
        <dbReference type="PROSITE-ProRule" id="PRU00596"/>
    </source>
</evidence>
<evidence type="ECO:0000256" key="3">
    <source>
        <dbReference type="SAM" id="MobiDB-lite"/>
    </source>
</evidence>
<evidence type="ECO:0000305" key="4"/>
<comment type="function">
    <text evidence="1">The main replicative DNA helicase, it participates in initiation and elongation during chromosome replication. Travels ahead of the DNA replisome, separating dsDNA into templates for DNA synthesis. A processive ATP-dependent 5'-3' DNA helicase it has DNA-dependent ATPase activity.</text>
</comment>
<comment type="catalytic activity">
    <reaction evidence="1">
        <text>Couples ATP hydrolysis with the unwinding of duplex DNA at the replication fork by translocating in the 5'-3' direction. This creates two antiparallel DNA single strands (ssDNA). The leading ssDNA polymer is the template for DNA polymerase III holoenzyme which synthesizes a continuous strand.</text>
        <dbReference type="EC" id="5.6.2.3"/>
    </reaction>
</comment>
<comment type="catalytic activity">
    <reaction evidence="1">
        <text>ATP + H2O = ADP + phosphate + H(+)</text>
        <dbReference type="Rhea" id="RHEA:13065"/>
        <dbReference type="ChEBI" id="CHEBI:15377"/>
        <dbReference type="ChEBI" id="CHEBI:15378"/>
        <dbReference type="ChEBI" id="CHEBI:30616"/>
        <dbReference type="ChEBI" id="CHEBI:43474"/>
        <dbReference type="ChEBI" id="CHEBI:456216"/>
        <dbReference type="EC" id="5.6.2.3"/>
    </reaction>
</comment>
<comment type="subunit">
    <text evidence="1">Homohexamer.</text>
</comment>
<comment type="similarity">
    <text evidence="4">Belongs to the helicase family. DnaB subfamily.</text>
</comment>
<sequence length="457" mass="50007">MSIAHIGLADGREQGEDRSPERTPPHDLLAEQSALGGMLLSKDAVADVVEVVRGTDFYIPKHEIVYDAILSLYSHGEPTDVITVTDELTKLGELSRAGGAEYLHTLTSLVPTAANAGYYANIVAEKALLRRLVEAGTRITQMGYKAEGEVLDLVNNAQAEIYSVTGTQEVEDYVPLTEAVTVAIDEIEASKHKDGSMTGVPTGFTELDELTNGLHPGQMIIVAARPALGKSTLALDFARAAAIKHDLPTIFFSLEMGRSEIAMRLLSAEATVPLQHMRKGTVDNRDWTTIAATRGRINDAPLYIDDSPNMTLVEIRAKCRRLKQRVGLKMVIIDYLQLMTSGKRVESRQQEVSEFSRALKLLAKELQVPVIALSQLNRGPEQRADKLPALSDLRESGSIEQDADVVVLLHRESAYEKDNPRAGEADLIVAKHRNGPTKTVKVAFQGMYSRFADMAPI</sequence>
<dbReference type="EC" id="5.6.2.3" evidence="1"/>
<dbReference type="EMBL" id="AE016822">
    <property type="protein sequence ID" value="AAT90121.1"/>
    <property type="molecule type" value="Genomic_DNA"/>
</dbReference>
<dbReference type="RefSeq" id="WP_011187100.1">
    <property type="nucleotide sequence ID" value="NC_006087.1"/>
</dbReference>
<dbReference type="SMR" id="Q6ABX1"/>
<dbReference type="STRING" id="281090.Lxx25140"/>
<dbReference type="KEGG" id="lxx:Lxx25140"/>
<dbReference type="eggNOG" id="COG0305">
    <property type="taxonomic scope" value="Bacteria"/>
</dbReference>
<dbReference type="HOGENOM" id="CLU_005373_0_0_11"/>
<dbReference type="Proteomes" id="UP000001306">
    <property type="component" value="Chromosome"/>
</dbReference>
<dbReference type="GO" id="GO:0005829">
    <property type="term" value="C:cytosol"/>
    <property type="evidence" value="ECO:0007669"/>
    <property type="project" value="TreeGrafter"/>
</dbReference>
<dbReference type="GO" id="GO:1990077">
    <property type="term" value="C:primosome complex"/>
    <property type="evidence" value="ECO:0007669"/>
    <property type="project" value="UniProtKB-KW"/>
</dbReference>
<dbReference type="GO" id="GO:0005524">
    <property type="term" value="F:ATP binding"/>
    <property type="evidence" value="ECO:0007669"/>
    <property type="project" value="UniProtKB-KW"/>
</dbReference>
<dbReference type="GO" id="GO:0016887">
    <property type="term" value="F:ATP hydrolysis activity"/>
    <property type="evidence" value="ECO:0007669"/>
    <property type="project" value="RHEA"/>
</dbReference>
<dbReference type="GO" id="GO:0003677">
    <property type="term" value="F:DNA binding"/>
    <property type="evidence" value="ECO:0007669"/>
    <property type="project" value="UniProtKB-KW"/>
</dbReference>
<dbReference type="GO" id="GO:0003678">
    <property type="term" value="F:DNA helicase activity"/>
    <property type="evidence" value="ECO:0007669"/>
    <property type="project" value="InterPro"/>
</dbReference>
<dbReference type="GO" id="GO:0006269">
    <property type="term" value="P:DNA replication, synthesis of primer"/>
    <property type="evidence" value="ECO:0007669"/>
    <property type="project" value="UniProtKB-KW"/>
</dbReference>
<dbReference type="CDD" id="cd00984">
    <property type="entry name" value="DnaB_C"/>
    <property type="match status" value="1"/>
</dbReference>
<dbReference type="FunFam" id="1.10.860.10:FF:000001">
    <property type="entry name" value="Replicative DNA helicase"/>
    <property type="match status" value="1"/>
</dbReference>
<dbReference type="FunFam" id="3.40.50.300:FF:000351">
    <property type="entry name" value="Replicative DNA helicase"/>
    <property type="match status" value="1"/>
</dbReference>
<dbReference type="Gene3D" id="1.10.860.10">
    <property type="entry name" value="DNAb Helicase, Chain A"/>
    <property type="match status" value="1"/>
</dbReference>
<dbReference type="Gene3D" id="3.40.50.300">
    <property type="entry name" value="P-loop containing nucleotide triphosphate hydrolases"/>
    <property type="match status" value="1"/>
</dbReference>
<dbReference type="InterPro" id="IPR036185">
    <property type="entry name" value="DNA_heli_DnaB-like_N_sf"/>
</dbReference>
<dbReference type="InterPro" id="IPR007692">
    <property type="entry name" value="DNA_helicase_DnaB"/>
</dbReference>
<dbReference type="InterPro" id="IPR007694">
    <property type="entry name" value="DNA_helicase_DnaB-like_C"/>
</dbReference>
<dbReference type="InterPro" id="IPR007693">
    <property type="entry name" value="DNA_helicase_DnaB-like_N"/>
</dbReference>
<dbReference type="InterPro" id="IPR016136">
    <property type="entry name" value="DNA_helicase_N/primase_C"/>
</dbReference>
<dbReference type="InterPro" id="IPR027417">
    <property type="entry name" value="P-loop_NTPase"/>
</dbReference>
<dbReference type="NCBIfam" id="TIGR00665">
    <property type="entry name" value="DnaB"/>
    <property type="match status" value="1"/>
</dbReference>
<dbReference type="PANTHER" id="PTHR30153:SF2">
    <property type="entry name" value="REPLICATIVE DNA HELICASE"/>
    <property type="match status" value="1"/>
</dbReference>
<dbReference type="PANTHER" id="PTHR30153">
    <property type="entry name" value="REPLICATIVE DNA HELICASE DNAB"/>
    <property type="match status" value="1"/>
</dbReference>
<dbReference type="Pfam" id="PF00772">
    <property type="entry name" value="DnaB"/>
    <property type="match status" value="1"/>
</dbReference>
<dbReference type="Pfam" id="PF03796">
    <property type="entry name" value="DnaB_C"/>
    <property type="match status" value="1"/>
</dbReference>
<dbReference type="SUPFAM" id="SSF48024">
    <property type="entry name" value="N-terminal domain of DnaB helicase"/>
    <property type="match status" value="1"/>
</dbReference>
<dbReference type="SUPFAM" id="SSF52540">
    <property type="entry name" value="P-loop containing nucleoside triphosphate hydrolases"/>
    <property type="match status" value="1"/>
</dbReference>
<dbReference type="PROSITE" id="PS51199">
    <property type="entry name" value="SF4_HELICASE"/>
    <property type="match status" value="1"/>
</dbReference>
<keyword id="KW-0067">ATP-binding</keyword>
<keyword id="KW-0235">DNA replication</keyword>
<keyword id="KW-0238">DNA-binding</keyword>
<keyword id="KW-0347">Helicase</keyword>
<keyword id="KW-0378">Hydrolase</keyword>
<keyword id="KW-0413">Isomerase</keyword>
<keyword id="KW-0547">Nucleotide-binding</keyword>
<keyword id="KW-0639">Primosome</keyword>
<keyword id="KW-1185">Reference proteome</keyword>
<feature type="chain" id="PRO_0000232456" description="Replicative DNA helicase DnaB">
    <location>
        <begin position="1"/>
        <end position="457"/>
    </location>
</feature>
<feature type="domain" description="SF4 helicase" evidence="2">
    <location>
        <begin position="193"/>
        <end position="457"/>
    </location>
</feature>
<feature type="region of interest" description="Disordered" evidence="3">
    <location>
        <begin position="1"/>
        <end position="26"/>
    </location>
</feature>
<feature type="compositionally biased region" description="Basic and acidic residues" evidence="3">
    <location>
        <begin position="10"/>
        <end position="26"/>
    </location>
</feature>
<feature type="binding site" evidence="2">
    <location>
        <begin position="224"/>
        <end position="231"/>
    </location>
    <ligand>
        <name>ATP</name>
        <dbReference type="ChEBI" id="CHEBI:30616"/>
    </ligand>
</feature>
<gene>
    <name type="primary">dnaB</name>
    <name type="ordered locus">Lxx25140</name>
</gene>
<accession>Q6ABX1</accession>
<organism>
    <name type="scientific">Leifsonia xyli subsp. xyli (strain CTCB07)</name>
    <dbReference type="NCBI Taxonomy" id="281090"/>
    <lineage>
        <taxon>Bacteria</taxon>
        <taxon>Bacillati</taxon>
        <taxon>Actinomycetota</taxon>
        <taxon>Actinomycetes</taxon>
        <taxon>Micrococcales</taxon>
        <taxon>Microbacteriaceae</taxon>
        <taxon>Leifsonia</taxon>
    </lineage>
</organism>
<name>DNAB_LEIXX</name>
<reference key="1">
    <citation type="journal article" date="2004" name="Mol. Plant Microbe Interact.">
        <title>The genome sequence of the Gram-positive sugarcane pathogen Leifsonia xyli subsp. xyli.</title>
        <authorList>
            <person name="Monteiro-Vitorello C.B."/>
            <person name="Camargo L.E.A."/>
            <person name="Van Sluys M.A."/>
            <person name="Kitajima J.P."/>
            <person name="Truffi D."/>
            <person name="do Amaral A.M."/>
            <person name="Harakava R."/>
            <person name="de Oliveira J.C.F."/>
            <person name="Wood D."/>
            <person name="de Oliveira M.C."/>
            <person name="Miyaki C.Y."/>
            <person name="Takita M.A."/>
            <person name="da Silva A.C.R."/>
            <person name="Furlan L.R."/>
            <person name="Carraro D.M."/>
            <person name="Camarotte G."/>
            <person name="Almeida N.F. Jr."/>
            <person name="Carrer H."/>
            <person name="Coutinho L.L."/>
            <person name="El-Dorry H.A."/>
            <person name="Ferro M.I.T."/>
            <person name="Gagliardi P.R."/>
            <person name="Giglioti E."/>
            <person name="Goldman M.H.S."/>
            <person name="Goldman G.H."/>
            <person name="Kimura E.T."/>
            <person name="Ferro E.S."/>
            <person name="Kuramae E.E."/>
            <person name="Lemos E.G.M."/>
            <person name="Lemos M.V.F."/>
            <person name="Mauro S.M.Z."/>
            <person name="Machado M.A."/>
            <person name="Marino C.L."/>
            <person name="Menck C.F."/>
            <person name="Nunes L.R."/>
            <person name="Oliveira R.C."/>
            <person name="Pereira G.G."/>
            <person name="Siqueira W."/>
            <person name="de Souza A.A."/>
            <person name="Tsai S.M."/>
            <person name="Zanca A.S."/>
            <person name="Simpson A.J.G."/>
            <person name="Brumbley S.M."/>
            <person name="Setubal J.C."/>
        </authorList>
    </citation>
    <scope>NUCLEOTIDE SEQUENCE [LARGE SCALE GENOMIC DNA]</scope>
    <source>
        <strain>CTCB07</strain>
    </source>
</reference>